<reference key="1">
    <citation type="journal article" date="2004" name="Nat. Biotechnol.">
        <title>Complete genome sequence of the metabolically versatile photosynthetic bacterium Rhodopseudomonas palustris.</title>
        <authorList>
            <person name="Larimer F.W."/>
            <person name="Chain P."/>
            <person name="Hauser L."/>
            <person name="Lamerdin J.E."/>
            <person name="Malfatti S."/>
            <person name="Do L."/>
            <person name="Land M.L."/>
            <person name="Pelletier D.A."/>
            <person name="Beatty J.T."/>
            <person name="Lang A.S."/>
            <person name="Tabita F.R."/>
            <person name="Gibson J.L."/>
            <person name="Hanson T.E."/>
            <person name="Bobst C."/>
            <person name="Torres y Torres J.L."/>
            <person name="Peres C."/>
            <person name="Harrison F.H."/>
            <person name="Gibson J."/>
            <person name="Harwood C.S."/>
        </authorList>
    </citation>
    <scope>NUCLEOTIDE SEQUENCE [LARGE SCALE GENOMIC DNA]</scope>
    <source>
        <strain>ATCC BAA-98 / CGA009</strain>
    </source>
</reference>
<organism>
    <name type="scientific">Rhodopseudomonas palustris (strain ATCC BAA-98 / CGA009)</name>
    <dbReference type="NCBI Taxonomy" id="258594"/>
    <lineage>
        <taxon>Bacteria</taxon>
        <taxon>Pseudomonadati</taxon>
        <taxon>Pseudomonadota</taxon>
        <taxon>Alphaproteobacteria</taxon>
        <taxon>Hyphomicrobiales</taxon>
        <taxon>Nitrobacteraceae</taxon>
        <taxon>Rhodopseudomonas</taxon>
    </lineage>
</organism>
<proteinExistence type="inferred from homology"/>
<accession>Q6N874</accession>
<comment type="function">
    <text evidence="1">Catalyzes the transfer of a dimethylallyl group onto the adenine at position 37 in tRNAs that read codons beginning with uridine, leading to the formation of N6-(dimethylallyl)adenosine (i(6)A).</text>
</comment>
<comment type="catalytic activity">
    <reaction evidence="1">
        <text>adenosine(37) in tRNA + dimethylallyl diphosphate = N(6)-dimethylallyladenosine(37) in tRNA + diphosphate</text>
        <dbReference type="Rhea" id="RHEA:26482"/>
        <dbReference type="Rhea" id="RHEA-COMP:10162"/>
        <dbReference type="Rhea" id="RHEA-COMP:10375"/>
        <dbReference type="ChEBI" id="CHEBI:33019"/>
        <dbReference type="ChEBI" id="CHEBI:57623"/>
        <dbReference type="ChEBI" id="CHEBI:74411"/>
        <dbReference type="ChEBI" id="CHEBI:74415"/>
        <dbReference type="EC" id="2.5.1.75"/>
    </reaction>
</comment>
<comment type="cofactor">
    <cofactor evidence="1">
        <name>Mg(2+)</name>
        <dbReference type="ChEBI" id="CHEBI:18420"/>
    </cofactor>
</comment>
<comment type="subunit">
    <text evidence="1">Monomer.</text>
</comment>
<comment type="similarity">
    <text evidence="1">Belongs to the IPP transferase family.</text>
</comment>
<keyword id="KW-0067">ATP-binding</keyword>
<keyword id="KW-0460">Magnesium</keyword>
<keyword id="KW-0547">Nucleotide-binding</keyword>
<keyword id="KW-0808">Transferase</keyword>
<keyword id="KW-0819">tRNA processing</keyword>
<gene>
    <name evidence="1" type="primary">miaA</name>
    <name type="ordered locus">RPA2030</name>
</gene>
<evidence type="ECO:0000255" key="1">
    <source>
        <dbReference type="HAMAP-Rule" id="MF_00185"/>
    </source>
</evidence>
<dbReference type="EC" id="2.5.1.75" evidence="1"/>
<dbReference type="EMBL" id="BX572599">
    <property type="protein sequence ID" value="CAE27471.1"/>
    <property type="molecule type" value="Genomic_DNA"/>
</dbReference>
<dbReference type="SMR" id="Q6N874"/>
<dbReference type="STRING" id="258594.RPA2030"/>
<dbReference type="eggNOG" id="COG0324">
    <property type="taxonomic scope" value="Bacteria"/>
</dbReference>
<dbReference type="HOGENOM" id="CLU_032616_0_1_5"/>
<dbReference type="PhylomeDB" id="Q6N874"/>
<dbReference type="GO" id="GO:0005524">
    <property type="term" value="F:ATP binding"/>
    <property type="evidence" value="ECO:0007669"/>
    <property type="project" value="UniProtKB-UniRule"/>
</dbReference>
<dbReference type="GO" id="GO:0052381">
    <property type="term" value="F:tRNA dimethylallyltransferase activity"/>
    <property type="evidence" value="ECO:0007669"/>
    <property type="project" value="UniProtKB-UniRule"/>
</dbReference>
<dbReference type="GO" id="GO:0006400">
    <property type="term" value="P:tRNA modification"/>
    <property type="evidence" value="ECO:0007669"/>
    <property type="project" value="TreeGrafter"/>
</dbReference>
<dbReference type="FunFam" id="1.10.20.140:FF:000001">
    <property type="entry name" value="tRNA dimethylallyltransferase"/>
    <property type="match status" value="1"/>
</dbReference>
<dbReference type="Gene3D" id="1.10.20.140">
    <property type="match status" value="1"/>
</dbReference>
<dbReference type="Gene3D" id="3.40.50.300">
    <property type="entry name" value="P-loop containing nucleotide triphosphate hydrolases"/>
    <property type="match status" value="1"/>
</dbReference>
<dbReference type="HAMAP" id="MF_00185">
    <property type="entry name" value="IPP_trans"/>
    <property type="match status" value="1"/>
</dbReference>
<dbReference type="InterPro" id="IPR039657">
    <property type="entry name" value="Dimethylallyltransferase"/>
</dbReference>
<dbReference type="InterPro" id="IPR018022">
    <property type="entry name" value="IPT"/>
</dbReference>
<dbReference type="InterPro" id="IPR027417">
    <property type="entry name" value="P-loop_NTPase"/>
</dbReference>
<dbReference type="NCBIfam" id="TIGR00174">
    <property type="entry name" value="miaA"/>
    <property type="match status" value="1"/>
</dbReference>
<dbReference type="PANTHER" id="PTHR11088">
    <property type="entry name" value="TRNA DIMETHYLALLYLTRANSFERASE"/>
    <property type="match status" value="1"/>
</dbReference>
<dbReference type="PANTHER" id="PTHR11088:SF60">
    <property type="entry name" value="TRNA DIMETHYLALLYLTRANSFERASE"/>
    <property type="match status" value="1"/>
</dbReference>
<dbReference type="Pfam" id="PF01715">
    <property type="entry name" value="IPPT"/>
    <property type="match status" value="1"/>
</dbReference>
<dbReference type="SUPFAM" id="SSF52540">
    <property type="entry name" value="P-loop containing nucleoside triphosphate hydrolases"/>
    <property type="match status" value="2"/>
</dbReference>
<protein>
    <recommendedName>
        <fullName evidence="1">tRNA dimethylallyltransferase</fullName>
        <ecNumber evidence="1">2.5.1.75</ecNumber>
    </recommendedName>
    <alternativeName>
        <fullName evidence="1">Dimethylallyl diphosphate:tRNA dimethylallyltransferase</fullName>
        <shortName evidence="1">DMAPP:tRNA dimethylallyltransferase</shortName>
        <shortName evidence="1">DMATase</shortName>
    </alternativeName>
    <alternativeName>
        <fullName evidence="1">Isopentenyl-diphosphate:tRNA isopentenyltransferase</fullName>
        <shortName evidence="1">IPP transferase</shortName>
        <shortName evidence="1">IPPT</shortName>
        <shortName evidence="1">IPTase</shortName>
    </alternativeName>
</protein>
<feature type="chain" id="PRO_0000163964" description="tRNA dimethylallyltransferase">
    <location>
        <begin position="1"/>
        <end position="321"/>
    </location>
</feature>
<feature type="region of interest" description="Interaction with substrate tRNA" evidence="1">
    <location>
        <begin position="50"/>
        <end position="53"/>
    </location>
</feature>
<feature type="binding site" evidence="1">
    <location>
        <begin position="25"/>
        <end position="32"/>
    </location>
    <ligand>
        <name>ATP</name>
        <dbReference type="ChEBI" id="CHEBI:30616"/>
    </ligand>
</feature>
<feature type="binding site" evidence="1">
    <location>
        <begin position="27"/>
        <end position="32"/>
    </location>
    <ligand>
        <name>substrate</name>
    </ligand>
</feature>
<feature type="site" description="Interaction with substrate tRNA" evidence="1">
    <location>
        <position position="116"/>
    </location>
</feature>
<feature type="site" description="Interaction with substrate tRNA" evidence="1">
    <location>
        <position position="138"/>
    </location>
</feature>
<name>MIAA_RHOPA</name>
<sequence>MATSDMTAEGPERHGRRPAAVLIAGPTASGKSALALKLAQASGGTVINTDSMQVYRDLRIITARPTPDEEALAPHRLYGTVDAAVNFSAGAYVEAAAAALAEVRAAGRLPILIGGTGLYFKALTRGLSAVPPVPAEVRDAVRLRLDRDGVQALHAELARQDPEAAARLAPADRTRIARALEVVLATGRPLADWHQQTSPPLLPPDDVVAVFLAPDREALYARIDSRFAAMLQGGALDEVAALAERQLDPLLPAMKAHGVPALIRHLRGEITLEEAASIGAADTRHYAKRQFTWFRHQLPEFKWVRPEEADAFLNTVIPGRA</sequence>